<dbReference type="EMBL" id="CU928161">
    <property type="protein sequence ID" value="CAR03959.1"/>
    <property type="molecule type" value="Genomic_DNA"/>
</dbReference>
<dbReference type="RefSeq" id="WP_001090835.1">
    <property type="nucleotide sequence ID" value="NC_011742.1"/>
</dbReference>
<dbReference type="SMR" id="B7MI01"/>
<dbReference type="KEGG" id="ecz:ECS88_2692"/>
<dbReference type="HOGENOM" id="CLU_047530_3_1_6"/>
<dbReference type="Proteomes" id="UP000000747">
    <property type="component" value="Chromosome"/>
</dbReference>
<dbReference type="GO" id="GO:0005886">
    <property type="term" value="C:plasma membrane"/>
    <property type="evidence" value="ECO:0007669"/>
    <property type="project" value="UniProtKB-SubCell"/>
</dbReference>
<dbReference type="GO" id="GO:0003677">
    <property type="term" value="F:DNA binding"/>
    <property type="evidence" value="ECO:0007669"/>
    <property type="project" value="UniProtKB-KW"/>
</dbReference>
<dbReference type="GO" id="GO:0008360">
    <property type="term" value="P:regulation of cell shape"/>
    <property type="evidence" value="ECO:0007669"/>
    <property type="project" value="UniProtKB-UniRule"/>
</dbReference>
<dbReference type="CDD" id="cd00093">
    <property type="entry name" value="HTH_XRE"/>
    <property type="match status" value="1"/>
</dbReference>
<dbReference type="FunFam" id="1.10.260.40:FF:000014">
    <property type="entry name" value="Cytoskeleton protein RodZ"/>
    <property type="match status" value="1"/>
</dbReference>
<dbReference type="Gene3D" id="1.10.260.40">
    <property type="entry name" value="lambda repressor-like DNA-binding domains"/>
    <property type="match status" value="1"/>
</dbReference>
<dbReference type="HAMAP" id="MF_02017">
    <property type="entry name" value="RodZ"/>
    <property type="match status" value="1"/>
</dbReference>
<dbReference type="InterPro" id="IPR050400">
    <property type="entry name" value="Bact_Cytoskel_RodZ"/>
</dbReference>
<dbReference type="InterPro" id="IPR001387">
    <property type="entry name" value="Cro/C1-type_HTH"/>
</dbReference>
<dbReference type="InterPro" id="IPR010982">
    <property type="entry name" value="Lambda_DNA-bd_dom_sf"/>
</dbReference>
<dbReference type="InterPro" id="IPR023690">
    <property type="entry name" value="RodZ"/>
</dbReference>
<dbReference type="InterPro" id="IPR025194">
    <property type="entry name" value="RodZ-like_C"/>
</dbReference>
<dbReference type="NCBIfam" id="NF008109">
    <property type="entry name" value="PRK10856.1"/>
    <property type="match status" value="1"/>
</dbReference>
<dbReference type="PANTHER" id="PTHR34475">
    <property type="match status" value="1"/>
</dbReference>
<dbReference type="PANTHER" id="PTHR34475:SF1">
    <property type="entry name" value="CYTOSKELETON PROTEIN RODZ"/>
    <property type="match status" value="1"/>
</dbReference>
<dbReference type="Pfam" id="PF13413">
    <property type="entry name" value="HTH_25"/>
    <property type="match status" value="1"/>
</dbReference>
<dbReference type="Pfam" id="PF13464">
    <property type="entry name" value="RodZ_C"/>
    <property type="match status" value="1"/>
</dbReference>
<dbReference type="SMART" id="SM00530">
    <property type="entry name" value="HTH_XRE"/>
    <property type="match status" value="1"/>
</dbReference>
<dbReference type="SUPFAM" id="SSF47413">
    <property type="entry name" value="lambda repressor-like DNA-binding domains"/>
    <property type="match status" value="1"/>
</dbReference>
<dbReference type="PROSITE" id="PS50943">
    <property type="entry name" value="HTH_CROC1"/>
    <property type="match status" value="1"/>
</dbReference>
<accession>B7MI01</accession>
<gene>
    <name evidence="1" type="primary">rodZ</name>
    <name type="ordered locus">ECS88_2692</name>
</gene>
<evidence type="ECO:0000255" key="1">
    <source>
        <dbReference type="HAMAP-Rule" id="MF_02017"/>
    </source>
</evidence>
<evidence type="ECO:0000256" key="2">
    <source>
        <dbReference type="SAM" id="MobiDB-lite"/>
    </source>
</evidence>
<protein>
    <recommendedName>
        <fullName evidence="1">Cytoskeleton protein RodZ</fullName>
    </recommendedName>
</protein>
<comment type="function">
    <text evidence="1">Cytoskeletal protein that is involved in cell-shape control through regulation of the length of the long axis.</text>
</comment>
<comment type="subcellular location">
    <subcellularLocation>
        <location evidence="1">Cell inner membrane</location>
        <topology evidence="1">Single-pass type II membrane protein</topology>
    </subcellularLocation>
    <text evidence="1">Forms helical filaments along the long axis of the cell.</text>
</comment>
<comment type="domain">
    <text evidence="1">The helix-turn-helix (HTH) motif in the cytoplasmic domain of the N-terminus is involved in the formation of spirals to maintain the rigid rod shape. As this protein is anchored in the cytoplasmic membrane, the HTH motif may contribute to protein-protein interactions to form the RodZ helix, which is localized beneath the cytoplasmic membrane. The C-terminal domain may be critical for determination of the rod shape by probably interacting with enzymes required for synthesis of the peptidoglycan layer, including PBPs in the periplasm.</text>
</comment>
<comment type="similarity">
    <text evidence="1">Belongs to the RodZ family.</text>
</comment>
<proteinExistence type="inferred from homology"/>
<keyword id="KW-0997">Cell inner membrane</keyword>
<keyword id="KW-1003">Cell membrane</keyword>
<keyword id="KW-0133">Cell shape</keyword>
<keyword id="KW-0238">DNA-binding</keyword>
<keyword id="KW-0472">Membrane</keyword>
<keyword id="KW-1185">Reference proteome</keyword>
<keyword id="KW-0735">Signal-anchor</keyword>
<keyword id="KW-0812">Transmembrane</keyword>
<keyword id="KW-1133">Transmembrane helix</keyword>
<organism>
    <name type="scientific">Escherichia coli O45:K1 (strain S88 / ExPEC)</name>
    <dbReference type="NCBI Taxonomy" id="585035"/>
    <lineage>
        <taxon>Bacteria</taxon>
        <taxon>Pseudomonadati</taxon>
        <taxon>Pseudomonadota</taxon>
        <taxon>Gammaproteobacteria</taxon>
        <taxon>Enterobacterales</taxon>
        <taxon>Enterobacteriaceae</taxon>
        <taxon>Escherichia</taxon>
    </lineage>
</organism>
<name>RODZ_ECO45</name>
<sequence length="335" mass="36127">MNTEATHDQNEALTTGARLRNAREQLGLSQQAVAERLCLKVSTVRDIEEDKAPADLASTFLRGYIRSYARLVHIPEEELLPGLEKQAPLRAAKVAPMQSFSLGKRRKKRDGWLMTFTWLVLFVVIGLSGAWWWQDHKAQQEEITTMADQSSAELNNNQSQSVPLDTSTTTDQAMATTPTSPVDTTATNTQTPAVTAPAPAVDPQQNAVVPPSQANVDTAATPAPAATTTPDGAAPLPTDQAGVTTPAVDPNALVMNFTADCWLEVTDATGKKLFSGMQRKDGNLNLTGQAPYKLKIGAPAAVQIQYQGKPVDLSRFIRTNQVARLTLNAEQSPAQ</sequence>
<reference key="1">
    <citation type="journal article" date="2009" name="PLoS Genet.">
        <title>Organised genome dynamics in the Escherichia coli species results in highly diverse adaptive paths.</title>
        <authorList>
            <person name="Touchon M."/>
            <person name="Hoede C."/>
            <person name="Tenaillon O."/>
            <person name="Barbe V."/>
            <person name="Baeriswyl S."/>
            <person name="Bidet P."/>
            <person name="Bingen E."/>
            <person name="Bonacorsi S."/>
            <person name="Bouchier C."/>
            <person name="Bouvet O."/>
            <person name="Calteau A."/>
            <person name="Chiapello H."/>
            <person name="Clermont O."/>
            <person name="Cruveiller S."/>
            <person name="Danchin A."/>
            <person name="Diard M."/>
            <person name="Dossat C."/>
            <person name="Karoui M.E."/>
            <person name="Frapy E."/>
            <person name="Garry L."/>
            <person name="Ghigo J.M."/>
            <person name="Gilles A.M."/>
            <person name="Johnson J."/>
            <person name="Le Bouguenec C."/>
            <person name="Lescat M."/>
            <person name="Mangenot S."/>
            <person name="Martinez-Jehanne V."/>
            <person name="Matic I."/>
            <person name="Nassif X."/>
            <person name="Oztas S."/>
            <person name="Petit M.A."/>
            <person name="Pichon C."/>
            <person name="Rouy Z."/>
            <person name="Ruf C.S."/>
            <person name="Schneider D."/>
            <person name="Tourret J."/>
            <person name="Vacherie B."/>
            <person name="Vallenet D."/>
            <person name="Medigue C."/>
            <person name="Rocha E.P.C."/>
            <person name="Denamur E."/>
        </authorList>
    </citation>
    <scope>NUCLEOTIDE SEQUENCE [LARGE SCALE GENOMIC DNA]</scope>
    <source>
        <strain>S88 / ExPEC</strain>
    </source>
</reference>
<feature type="chain" id="PRO_1000189537" description="Cytoskeleton protein RodZ">
    <location>
        <begin position="1"/>
        <end position="335"/>
    </location>
</feature>
<feature type="topological domain" description="Cytoplasmic" evidence="1">
    <location>
        <begin position="1"/>
        <end position="111"/>
    </location>
</feature>
<feature type="transmembrane region" description="Helical; Signal-anchor for type II membrane protein" evidence="1">
    <location>
        <begin position="112"/>
        <end position="132"/>
    </location>
</feature>
<feature type="topological domain" description="Periplasmic" evidence="1">
    <location>
        <begin position="133"/>
        <end position="335"/>
    </location>
</feature>
<feature type="domain" description="HTH cro/C1-type" evidence="1">
    <location>
        <begin position="19"/>
        <end position="71"/>
    </location>
</feature>
<feature type="DNA-binding region" description="H-T-H motif" evidence="1">
    <location>
        <begin position="30"/>
        <end position="49"/>
    </location>
</feature>
<feature type="region of interest" description="Disordered" evidence="2">
    <location>
        <begin position="148"/>
        <end position="244"/>
    </location>
</feature>
<feature type="compositionally biased region" description="Polar residues" evidence="2">
    <location>
        <begin position="148"/>
        <end position="164"/>
    </location>
</feature>
<feature type="compositionally biased region" description="Low complexity" evidence="2">
    <location>
        <begin position="165"/>
        <end position="205"/>
    </location>
</feature>
<feature type="compositionally biased region" description="Low complexity" evidence="2">
    <location>
        <begin position="217"/>
        <end position="239"/>
    </location>
</feature>